<evidence type="ECO:0000255" key="1">
    <source>
        <dbReference type="HAMAP-Rule" id="MF_00268"/>
    </source>
</evidence>
<feature type="chain" id="PRO_0000122770" description="Protein RecA">
    <location>
        <begin position="1" status="less than"/>
        <end position="274" status="greater than"/>
    </location>
</feature>
<feature type="binding site" evidence="1">
    <location>
        <begin position="43"/>
        <end position="50"/>
    </location>
    <ligand>
        <name>ATP</name>
        <dbReference type="ChEBI" id="CHEBI:30616"/>
    </ligand>
</feature>
<feature type="non-terminal residue">
    <location>
        <position position="1"/>
    </location>
</feature>
<feature type="non-terminal residue">
    <location>
        <position position="274"/>
    </location>
</feature>
<gene>
    <name evidence="1" type="primary">recA</name>
</gene>
<dbReference type="EMBL" id="U57910">
    <property type="protein sequence ID" value="AAB49190.1"/>
    <property type="molecule type" value="Genomic_DNA"/>
</dbReference>
<dbReference type="SMR" id="Q59592"/>
<dbReference type="GO" id="GO:0005829">
    <property type="term" value="C:cytosol"/>
    <property type="evidence" value="ECO:0007669"/>
    <property type="project" value="TreeGrafter"/>
</dbReference>
<dbReference type="GO" id="GO:0005524">
    <property type="term" value="F:ATP binding"/>
    <property type="evidence" value="ECO:0007669"/>
    <property type="project" value="UniProtKB-KW"/>
</dbReference>
<dbReference type="GO" id="GO:0016887">
    <property type="term" value="F:ATP hydrolysis activity"/>
    <property type="evidence" value="ECO:0007669"/>
    <property type="project" value="InterPro"/>
</dbReference>
<dbReference type="GO" id="GO:0140664">
    <property type="term" value="F:ATP-dependent DNA damage sensor activity"/>
    <property type="evidence" value="ECO:0007669"/>
    <property type="project" value="InterPro"/>
</dbReference>
<dbReference type="GO" id="GO:0003697">
    <property type="term" value="F:single-stranded DNA binding"/>
    <property type="evidence" value="ECO:0007669"/>
    <property type="project" value="InterPro"/>
</dbReference>
<dbReference type="GO" id="GO:0006310">
    <property type="term" value="P:DNA recombination"/>
    <property type="evidence" value="ECO:0007669"/>
    <property type="project" value="UniProtKB-KW"/>
</dbReference>
<dbReference type="GO" id="GO:0006281">
    <property type="term" value="P:DNA repair"/>
    <property type="evidence" value="ECO:0007669"/>
    <property type="project" value="UniProtKB-KW"/>
</dbReference>
<dbReference type="GO" id="GO:0009432">
    <property type="term" value="P:SOS response"/>
    <property type="evidence" value="ECO:0007669"/>
    <property type="project" value="UniProtKB-KW"/>
</dbReference>
<dbReference type="CDD" id="cd00983">
    <property type="entry name" value="RecA"/>
    <property type="match status" value="1"/>
</dbReference>
<dbReference type="FunFam" id="3.40.50.300:FF:000087">
    <property type="entry name" value="Recombinase RecA"/>
    <property type="match status" value="1"/>
</dbReference>
<dbReference type="Gene3D" id="3.40.50.300">
    <property type="entry name" value="P-loop containing nucleotide triphosphate hydrolases"/>
    <property type="match status" value="1"/>
</dbReference>
<dbReference type="HAMAP" id="MF_00268">
    <property type="entry name" value="RecA"/>
    <property type="match status" value="1"/>
</dbReference>
<dbReference type="InterPro" id="IPR003593">
    <property type="entry name" value="AAA+_ATPase"/>
</dbReference>
<dbReference type="InterPro" id="IPR013765">
    <property type="entry name" value="DNA_recomb/repair_RecA"/>
</dbReference>
<dbReference type="InterPro" id="IPR020584">
    <property type="entry name" value="DNA_recomb/repair_RecA_CS"/>
</dbReference>
<dbReference type="InterPro" id="IPR027417">
    <property type="entry name" value="P-loop_NTPase"/>
</dbReference>
<dbReference type="InterPro" id="IPR049261">
    <property type="entry name" value="RecA-like_C"/>
</dbReference>
<dbReference type="InterPro" id="IPR049428">
    <property type="entry name" value="RecA-like_N"/>
</dbReference>
<dbReference type="InterPro" id="IPR020588">
    <property type="entry name" value="RecA_ATP-bd"/>
</dbReference>
<dbReference type="InterPro" id="IPR023400">
    <property type="entry name" value="RecA_C_sf"/>
</dbReference>
<dbReference type="InterPro" id="IPR020587">
    <property type="entry name" value="RecA_monomer-monomer_interface"/>
</dbReference>
<dbReference type="NCBIfam" id="TIGR02012">
    <property type="entry name" value="tigrfam_recA"/>
    <property type="match status" value="1"/>
</dbReference>
<dbReference type="PANTHER" id="PTHR45900:SF1">
    <property type="entry name" value="MITOCHONDRIAL DNA REPAIR PROTEIN RECA HOMOLOG-RELATED"/>
    <property type="match status" value="1"/>
</dbReference>
<dbReference type="PANTHER" id="PTHR45900">
    <property type="entry name" value="RECA"/>
    <property type="match status" value="1"/>
</dbReference>
<dbReference type="Pfam" id="PF00154">
    <property type="entry name" value="RecA"/>
    <property type="match status" value="1"/>
</dbReference>
<dbReference type="Pfam" id="PF21096">
    <property type="entry name" value="RecA_C"/>
    <property type="match status" value="1"/>
</dbReference>
<dbReference type="PRINTS" id="PR00142">
    <property type="entry name" value="RECA"/>
</dbReference>
<dbReference type="SMART" id="SM00382">
    <property type="entry name" value="AAA"/>
    <property type="match status" value="1"/>
</dbReference>
<dbReference type="SUPFAM" id="SSF52540">
    <property type="entry name" value="P-loop containing nucleoside triphosphate hydrolases"/>
    <property type="match status" value="1"/>
</dbReference>
<dbReference type="SUPFAM" id="SSF54752">
    <property type="entry name" value="RecA protein, C-terminal domain"/>
    <property type="match status" value="1"/>
</dbReference>
<dbReference type="PROSITE" id="PS00321">
    <property type="entry name" value="RECA_1"/>
    <property type="match status" value="1"/>
</dbReference>
<dbReference type="PROSITE" id="PS50162">
    <property type="entry name" value="RECA_2"/>
    <property type="match status" value="1"/>
</dbReference>
<dbReference type="PROSITE" id="PS50163">
    <property type="entry name" value="RECA_3"/>
    <property type="match status" value="1"/>
</dbReference>
<comment type="function">
    <text evidence="1">Can catalyze the hydrolysis of ATP in the presence of single-stranded DNA, the ATP-dependent uptake of single-stranded DNA by duplex DNA, and the ATP-dependent hybridization of homologous single-stranded DNAs. It interacts with LexA causing its activation and leading to its autocatalytic cleavage.</text>
</comment>
<comment type="subcellular location">
    <subcellularLocation>
        <location evidence="1">Cytoplasm</location>
    </subcellularLocation>
</comment>
<comment type="similarity">
    <text evidence="1">Belongs to the RecA family.</text>
</comment>
<sequence length="274" mass="29677">SIINMDGSHKQEDLEVISTGSLGLDLALGVGGLPRGRVVEIFGPESSGKTTLCLESIAQCQKNGGVCAFIDAEHAFDPIYARKLGVKVEELYLSQPDTGEQALEICDTLVRSGGVDMVVVDSVAALVPKAEIEGEMGDSHVGLQARLMSQALRKLTGHIKRTNTLVVFINQIRMKIGVVYGSPETTTGGNALKFYASVRLDIRRAGQIKKGDEILGNETKVKVIKNKVAPPFRQAEFDILYGEGISWEGELIDIGVKHDIIDKSGAWYSYNDTK</sequence>
<name>RECA_NEIAN</name>
<accession>Q59592</accession>
<reference key="1">
    <citation type="journal article" date="1996" name="J. Mol. Evol.">
        <title>A comparison of the nucleotide sequences of the adk and recA genes of pathogenic and commensal Neisseria species: evidence for extensive interspecies recombination within adk.</title>
        <authorList>
            <person name="Feil E."/>
            <person name="Zhou J."/>
            <person name="Maynard Smith J."/>
            <person name="Spratt B.G."/>
        </authorList>
    </citation>
    <scope>NUCLEOTIDE SEQUENCE [GENOMIC DNA]</scope>
    <source>
        <strain>ATCC 49930 / CIP 72.15 / NCTC 10212 / NA10</strain>
    </source>
</reference>
<organism>
    <name type="scientific">Neisseria animalis</name>
    <dbReference type="NCBI Taxonomy" id="492"/>
    <lineage>
        <taxon>Bacteria</taxon>
        <taxon>Pseudomonadati</taxon>
        <taxon>Pseudomonadota</taxon>
        <taxon>Betaproteobacteria</taxon>
        <taxon>Neisseriales</taxon>
        <taxon>Neisseriaceae</taxon>
        <taxon>Neisseria</taxon>
    </lineage>
</organism>
<protein>
    <recommendedName>
        <fullName evidence="1">Protein RecA</fullName>
    </recommendedName>
    <alternativeName>
        <fullName evidence="1">Recombinase A</fullName>
    </alternativeName>
</protein>
<proteinExistence type="inferred from homology"/>
<keyword id="KW-0067">ATP-binding</keyword>
<keyword id="KW-0963">Cytoplasm</keyword>
<keyword id="KW-0227">DNA damage</keyword>
<keyword id="KW-0233">DNA recombination</keyword>
<keyword id="KW-0234">DNA repair</keyword>
<keyword id="KW-0238">DNA-binding</keyword>
<keyword id="KW-0547">Nucleotide-binding</keyword>
<keyword id="KW-0742">SOS response</keyword>